<accession>Q3IWB1</accession>
<protein>
    <recommendedName>
        <fullName evidence="1">Gas vesicle protein A</fullName>
        <shortName evidence="1 2">GvpA</shortName>
    </recommendedName>
</protein>
<gene>
    <name evidence="1 2" type="primary">gvpA</name>
    <name type="ordered locus">RHOS4_36050</name>
    <name type="ordered locus">RSP_3573</name>
</gene>
<evidence type="ECO:0000255" key="1">
    <source>
        <dbReference type="HAMAP-Rule" id="MF_00576"/>
    </source>
</evidence>
<evidence type="ECO:0000303" key="2">
    <source ref="1"/>
</evidence>
<sequence length="70" mass="7398">MAIEKSVASASIAEVIDRILDKGVVIDAFVRVSLVGIELIAIEVRAVVASIETWLKYAEAVGLTVDPATT</sequence>
<comment type="function">
    <text evidence="1">Gas vesicles are hollow, gas filled proteinaceous nanostructures found in some microorganisms. During planktonic growth they allow positioning of the organism at a favorable depth for light or nutrient acquisition. GvpA forms the protein shell.</text>
</comment>
<comment type="subunit">
    <text evidence="1">The gas vesicle shell is 2 nm thick and consists of a single layer of this protein. It forms helical ribs nearly perpendicular to the long axis of the vesicle.</text>
</comment>
<comment type="subcellular location">
    <subcellularLocation>
        <location evidence="1">Gas vesicle shell</location>
    </subcellularLocation>
</comment>
<comment type="similarity">
    <text evidence="1">Belongs to the gas vesicle GvpA family.</text>
</comment>
<organism>
    <name type="scientific">Cereibacter sphaeroides (strain ATCC 17023 / DSM 158 / JCM 6121 / CCUG 31486 / LMG 2827 / NBRC 12203 / NCIMB 8253 / ATH 2.4.1.)</name>
    <name type="common">Rhodobacter sphaeroides</name>
    <dbReference type="NCBI Taxonomy" id="272943"/>
    <lineage>
        <taxon>Bacteria</taxon>
        <taxon>Pseudomonadati</taxon>
        <taxon>Pseudomonadota</taxon>
        <taxon>Alphaproteobacteria</taxon>
        <taxon>Rhodobacterales</taxon>
        <taxon>Paracoccaceae</taxon>
        <taxon>Cereibacter</taxon>
    </lineage>
</organism>
<proteinExistence type="inferred from homology"/>
<reference key="1">
    <citation type="submission" date="2005-09" db="EMBL/GenBank/DDBJ databases">
        <title>Complete sequence of chromosome 2 of Rhodobacter sphaeroides 2.4.1.</title>
        <authorList>
            <person name="Copeland A."/>
            <person name="Lucas S."/>
            <person name="Lapidus A."/>
            <person name="Barry K."/>
            <person name="Detter J.C."/>
            <person name="Glavina T."/>
            <person name="Hammon N."/>
            <person name="Israni S."/>
            <person name="Pitluck S."/>
            <person name="Richardson P."/>
            <person name="Mackenzie C."/>
            <person name="Choudhary M."/>
            <person name="Larimer F."/>
            <person name="Hauser L.J."/>
            <person name="Land M."/>
            <person name="Donohue T.J."/>
            <person name="Kaplan S."/>
        </authorList>
    </citation>
    <scope>NUCLEOTIDE SEQUENCE [LARGE SCALE GENOMIC DNA]</scope>
    <source>
        <strain>ATCC 17023 / DSM 158 / JCM 6121 / CCUG 31486 / LMG 2827 / NBRC 12203 / NCIMB 8253 / ATH 2.4.1.</strain>
    </source>
</reference>
<name>GVPA_CERS4</name>
<feature type="chain" id="PRO_1000025111" description="Gas vesicle protein A">
    <location>
        <begin position="1"/>
        <end position="70"/>
    </location>
</feature>
<keyword id="KW-0304">Gas vesicle</keyword>
<keyword id="KW-1185">Reference proteome</keyword>
<dbReference type="EMBL" id="CP000144">
    <property type="protein sequence ID" value="ABA81173.1"/>
    <property type="molecule type" value="Genomic_DNA"/>
</dbReference>
<dbReference type="RefSeq" id="WP_002724507.1">
    <property type="nucleotide sequence ID" value="NZ_CP030272.1"/>
</dbReference>
<dbReference type="RefSeq" id="YP_355074.1">
    <property type="nucleotide sequence ID" value="NC_007494.2"/>
</dbReference>
<dbReference type="SMR" id="Q3IWB1"/>
<dbReference type="STRING" id="272943.RSP_3573"/>
<dbReference type="EnsemblBacteria" id="ABA81173">
    <property type="protein sequence ID" value="ABA81173"/>
    <property type="gene ID" value="RSP_3573"/>
</dbReference>
<dbReference type="GeneID" id="67449050"/>
<dbReference type="KEGG" id="rsp:RSP_3573"/>
<dbReference type="PATRIC" id="fig|272943.9.peg.4009"/>
<dbReference type="eggNOG" id="ENOG5032YMQ">
    <property type="taxonomic scope" value="Bacteria"/>
</dbReference>
<dbReference type="OrthoDB" id="284387at2"/>
<dbReference type="PhylomeDB" id="Q3IWB1"/>
<dbReference type="Proteomes" id="UP000002703">
    <property type="component" value="Chromosome 2"/>
</dbReference>
<dbReference type="GO" id="GO:0033172">
    <property type="term" value="C:gas vesicle shell"/>
    <property type="evidence" value="ECO:0007669"/>
    <property type="project" value="UniProtKB-UniRule"/>
</dbReference>
<dbReference type="GO" id="GO:0012506">
    <property type="term" value="C:vesicle membrane"/>
    <property type="evidence" value="ECO:0007669"/>
    <property type="project" value="InterPro"/>
</dbReference>
<dbReference type="GO" id="GO:0005198">
    <property type="term" value="F:structural molecule activity"/>
    <property type="evidence" value="ECO:0007669"/>
    <property type="project" value="InterPro"/>
</dbReference>
<dbReference type="HAMAP" id="MF_00576">
    <property type="entry name" value="Gas_vesicle_A"/>
    <property type="match status" value="1"/>
</dbReference>
<dbReference type="InterPro" id="IPR000638">
    <property type="entry name" value="Gas-vesicle_GvpA-like"/>
</dbReference>
<dbReference type="InterPro" id="IPR047870">
    <property type="entry name" value="Gas_vesicle_GvpA"/>
</dbReference>
<dbReference type="InterPro" id="IPR050530">
    <property type="entry name" value="GvpA"/>
</dbReference>
<dbReference type="InterPro" id="IPR018493">
    <property type="entry name" value="GvpA-like_CS"/>
</dbReference>
<dbReference type="NCBIfam" id="NF006874">
    <property type="entry name" value="PRK09371.1"/>
    <property type="match status" value="1"/>
</dbReference>
<dbReference type="PANTHER" id="PTHR35344:SF4">
    <property type="entry name" value="GAS VESICLE PROTEIN A1"/>
    <property type="match status" value="1"/>
</dbReference>
<dbReference type="PANTHER" id="PTHR35344">
    <property type="entry name" value="GAS VESICLE STRUCTURAL PROTEIN 2-RELATED"/>
    <property type="match status" value="1"/>
</dbReference>
<dbReference type="Pfam" id="PF00741">
    <property type="entry name" value="Gas_vesicle"/>
    <property type="match status" value="1"/>
</dbReference>
<dbReference type="PROSITE" id="PS00234">
    <property type="entry name" value="GAS_VESICLE_A_1"/>
    <property type="match status" value="1"/>
</dbReference>
<dbReference type="PROSITE" id="PS00669">
    <property type="entry name" value="GAS_VESICLE_A_2"/>
    <property type="match status" value="1"/>
</dbReference>